<keyword id="KW-0903">Direct protein sequencing</keyword>
<keyword id="KW-0479">Metal-binding</keyword>
<keyword id="KW-0496">Mitochondrion</keyword>
<keyword id="KW-0520">NAD</keyword>
<keyword id="KW-0560">Oxidoreductase</keyword>
<keyword id="KW-0809">Transit peptide</keyword>
<accession>P37224</accession>
<protein>
    <recommendedName>
        <fullName>NAD-dependent malic enzyme, mitochondrial</fullName>
        <shortName>NAD-ME</shortName>
        <ecNumber evidence="1">1.1.1.39</ecNumber>
    </recommendedName>
</protein>
<organism>
    <name type="scientific">Amaranthus hypochondriacus</name>
    <name type="common">Prince-of-Wales feather</name>
    <name type="synonym">Amaranthus hybridus var. hypochondriacus</name>
    <dbReference type="NCBI Taxonomy" id="28502"/>
    <lineage>
        <taxon>Eukaryota</taxon>
        <taxon>Viridiplantae</taxon>
        <taxon>Streptophyta</taxon>
        <taxon>Embryophyta</taxon>
        <taxon>Tracheophyta</taxon>
        <taxon>Spermatophyta</taxon>
        <taxon>Magnoliopsida</taxon>
        <taxon>eudicotyledons</taxon>
        <taxon>Gunneridae</taxon>
        <taxon>Pentapetalae</taxon>
        <taxon>Caryophyllales</taxon>
        <taxon>Amaranthaceae</taxon>
        <taxon>Amaranthus</taxon>
    </lineage>
</organism>
<evidence type="ECO:0000250" key="1">
    <source>
        <dbReference type="UniProtKB" id="P23368"/>
    </source>
</evidence>
<evidence type="ECO:0000255" key="2"/>
<evidence type="ECO:0000269" key="3">
    <source>
    </source>
</evidence>
<evidence type="ECO:0000305" key="4"/>
<proteinExistence type="evidence at protein level"/>
<feature type="transit peptide" description="Mitochondrion">
    <location>
        <begin position="1"/>
        <end position="31"/>
    </location>
</feature>
<feature type="chain" id="PRO_0000018542" description="NAD-dependent malic enzyme, mitochondrial">
    <location>
        <begin position="32"/>
        <end position="623"/>
    </location>
</feature>
<feature type="active site" description="Proton donor" evidence="2">
    <location>
        <position position="143"/>
    </location>
</feature>
<feature type="active site" description="Proton acceptor" evidence="1">
    <location>
        <position position="214"/>
    </location>
</feature>
<feature type="binding site" evidence="1">
    <location>
        <position position="88"/>
    </location>
    <ligand>
        <name>fumarate</name>
        <dbReference type="ChEBI" id="CHEBI:29806"/>
        <note>allosteric activator</note>
    </ligand>
</feature>
<feature type="binding site" evidence="1">
    <location>
        <position position="122"/>
    </location>
    <ligand>
        <name>fumarate</name>
        <dbReference type="ChEBI" id="CHEBI:29806"/>
        <note>allosteric activator</note>
    </ligand>
</feature>
<feature type="binding site" evidence="1">
    <location>
        <position position="196"/>
    </location>
    <ligand>
        <name>(S)-malate</name>
        <dbReference type="ChEBI" id="CHEBI:15589"/>
    </ligand>
</feature>
<feature type="binding site" evidence="1">
    <location>
        <position position="196"/>
    </location>
    <ligand>
        <name>NAD(+)</name>
        <dbReference type="ChEBI" id="CHEBI:57540"/>
    </ligand>
</feature>
<feature type="binding site" evidence="1">
    <location>
        <position position="285"/>
    </location>
    <ligand>
        <name>a divalent metal cation</name>
        <dbReference type="ChEBI" id="CHEBI:60240"/>
    </ligand>
</feature>
<feature type="binding site" evidence="1">
    <location>
        <position position="286"/>
    </location>
    <ligand>
        <name>a divalent metal cation</name>
        <dbReference type="ChEBI" id="CHEBI:60240"/>
    </ligand>
</feature>
<feature type="binding site" evidence="1">
    <location>
        <position position="289"/>
    </location>
    <ligand>
        <name>NAD(+)</name>
        <dbReference type="ChEBI" id="CHEBI:57540"/>
    </ligand>
</feature>
<feature type="binding site" evidence="1">
    <location>
        <position position="309"/>
    </location>
    <ligand>
        <name>a divalent metal cation</name>
        <dbReference type="ChEBI" id="CHEBI:60240"/>
    </ligand>
</feature>
<feature type="binding site" evidence="1">
    <location>
        <position position="345"/>
    </location>
    <ligand>
        <name>NAD(+)</name>
        <dbReference type="ChEBI" id="CHEBI:57540"/>
    </ligand>
</feature>
<feature type="binding site" evidence="1">
    <location>
        <position position="464"/>
    </location>
    <ligand>
        <name>(S)-malate</name>
        <dbReference type="ChEBI" id="CHEBI:15589"/>
    </ligand>
</feature>
<feature type="binding site" evidence="1">
    <location>
        <position position="509"/>
    </location>
    <ligand>
        <name>(S)-malate</name>
        <dbReference type="ChEBI" id="CHEBI:15589"/>
    </ligand>
</feature>
<name>MAOM_AMAHP</name>
<dbReference type="EC" id="1.1.1.39" evidence="1"/>
<dbReference type="EMBL" id="U01162">
    <property type="protein sequence ID" value="AAA19014.1"/>
    <property type="molecule type" value="mRNA"/>
</dbReference>
<dbReference type="PIR" id="A49983">
    <property type="entry name" value="A49983"/>
</dbReference>
<dbReference type="SMR" id="P37224"/>
<dbReference type="UniPathway" id="UPA00322"/>
<dbReference type="GO" id="GO:0005759">
    <property type="term" value="C:mitochondrial matrix"/>
    <property type="evidence" value="ECO:0007669"/>
    <property type="project" value="UniProtKB-SubCell"/>
</dbReference>
<dbReference type="GO" id="GO:0004471">
    <property type="term" value="F:malate dehydrogenase (decarboxylating) (NAD+) activity"/>
    <property type="evidence" value="ECO:0007669"/>
    <property type="project" value="UniProtKB-EC"/>
</dbReference>
<dbReference type="GO" id="GO:0046872">
    <property type="term" value="F:metal ion binding"/>
    <property type="evidence" value="ECO:0007669"/>
    <property type="project" value="UniProtKB-KW"/>
</dbReference>
<dbReference type="GO" id="GO:0051287">
    <property type="term" value="F:NAD binding"/>
    <property type="evidence" value="ECO:0007669"/>
    <property type="project" value="InterPro"/>
</dbReference>
<dbReference type="GO" id="GO:0006108">
    <property type="term" value="P:malate metabolic process"/>
    <property type="evidence" value="ECO:0007669"/>
    <property type="project" value="TreeGrafter"/>
</dbReference>
<dbReference type="CDD" id="cd05312">
    <property type="entry name" value="NAD_bind_1_malic_enz"/>
    <property type="match status" value="1"/>
</dbReference>
<dbReference type="FunFam" id="3.40.50.10380:FF:000005">
    <property type="entry name" value="Malic enzyme"/>
    <property type="match status" value="1"/>
</dbReference>
<dbReference type="FunFam" id="3.40.50.720:FF:000237">
    <property type="entry name" value="Malic enzyme"/>
    <property type="match status" value="1"/>
</dbReference>
<dbReference type="Gene3D" id="3.40.50.10380">
    <property type="entry name" value="Malic enzyme, N-terminal domain"/>
    <property type="match status" value="1"/>
</dbReference>
<dbReference type="Gene3D" id="3.40.50.720">
    <property type="entry name" value="NAD(P)-binding Rossmann-like Domain"/>
    <property type="match status" value="1"/>
</dbReference>
<dbReference type="InterPro" id="IPR046346">
    <property type="entry name" value="Aminoacid_DH-like_N_sf"/>
</dbReference>
<dbReference type="InterPro" id="IPR015884">
    <property type="entry name" value="Malic_enzyme_CS"/>
</dbReference>
<dbReference type="InterPro" id="IPR012301">
    <property type="entry name" value="Malic_N_dom"/>
</dbReference>
<dbReference type="InterPro" id="IPR037062">
    <property type="entry name" value="Malic_N_dom_sf"/>
</dbReference>
<dbReference type="InterPro" id="IPR012302">
    <property type="entry name" value="Malic_NAD-bd"/>
</dbReference>
<dbReference type="InterPro" id="IPR001891">
    <property type="entry name" value="Malic_OxRdtase"/>
</dbReference>
<dbReference type="InterPro" id="IPR036291">
    <property type="entry name" value="NAD(P)-bd_dom_sf"/>
</dbReference>
<dbReference type="NCBIfam" id="NF010052">
    <property type="entry name" value="PRK13529.1"/>
    <property type="match status" value="1"/>
</dbReference>
<dbReference type="PANTHER" id="PTHR23406">
    <property type="entry name" value="MALIC ENZYME-RELATED"/>
    <property type="match status" value="1"/>
</dbReference>
<dbReference type="PANTHER" id="PTHR23406:SF32">
    <property type="entry name" value="NADP-DEPENDENT MALIC ENZYME"/>
    <property type="match status" value="1"/>
</dbReference>
<dbReference type="Pfam" id="PF00390">
    <property type="entry name" value="malic"/>
    <property type="match status" value="1"/>
</dbReference>
<dbReference type="Pfam" id="PF03949">
    <property type="entry name" value="Malic_M"/>
    <property type="match status" value="1"/>
</dbReference>
<dbReference type="PIRSF" id="PIRSF000106">
    <property type="entry name" value="ME"/>
    <property type="match status" value="1"/>
</dbReference>
<dbReference type="PRINTS" id="PR00072">
    <property type="entry name" value="MALOXRDTASE"/>
</dbReference>
<dbReference type="SMART" id="SM01274">
    <property type="entry name" value="malic"/>
    <property type="match status" value="1"/>
</dbReference>
<dbReference type="SMART" id="SM00919">
    <property type="entry name" value="Malic_M"/>
    <property type="match status" value="1"/>
</dbReference>
<dbReference type="SUPFAM" id="SSF53223">
    <property type="entry name" value="Aminoacid dehydrogenase-like, N-terminal domain"/>
    <property type="match status" value="1"/>
</dbReference>
<dbReference type="SUPFAM" id="SSF51735">
    <property type="entry name" value="NAD(P)-binding Rossmann-fold domains"/>
    <property type="match status" value="1"/>
</dbReference>
<dbReference type="PROSITE" id="PS00331">
    <property type="entry name" value="MALIC_ENZYMES"/>
    <property type="match status" value="1"/>
</dbReference>
<comment type="catalytic activity">
    <reaction evidence="1">
        <text>(S)-malate + NAD(+) = pyruvate + CO2 + NADH</text>
        <dbReference type="Rhea" id="RHEA:12653"/>
        <dbReference type="ChEBI" id="CHEBI:15361"/>
        <dbReference type="ChEBI" id="CHEBI:15589"/>
        <dbReference type="ChEBI" id="CHEBI:16526"/>
        <dbReference type="ChEBI" id="CHEBI:57540"/>
        <dbReference type="ChEBI" id="CHEBI:57945"/>
        <dbReference type="EC" id="1.1.1.39"/>
    </reaction>
</comment>
<comment type="cofactor">
    <cofactor evidence="1">
        <name>Mg(2+)</name>
        <dbReference type="ChEBI" id="CHEBI:18420"/>
    </cofactor>
    <cofactor evidence="1">
        <name>Mn(2+)</name>
        <dbReference type="ChEBI" id="CHEBI:29035"/>
    </cofactor>
    <text evidence="1">Divalent metal cations. Prefers magnesium or manganese.</text>
</comment>
<comment type="pathway">
    <text>Photosynthesis; C4 acid pathway.</text>
</comment>
<comment type="subunit">
    <text evidence="3">Heterodimer of two related subunits.</text>
</comment>
<comment type="subcellular location">
    <subcellularLocation>
        <location evidence="3">Mitochondrion matrix</location>
    </subcellularLocation>
</comment>
<comment type="similarity">
    <text evidence="4">Belongs to the malic enzymes family.</text>
</comment>
<sequence>MLVLCSRSRLTSSLIRRLKDQIANVSNHRSFATSEGHRLAIVNKRSLDILQDPWFNKGTAFSMTERDRLDLRGLLPPNVMTTEQQIERFTADLRVLELTTKDGPSDTYDLAKWRILNRLHDRNETMFFKVLIENIEEYAPIVSTPTVGLVCQKFSGLYRRPRGMYFSSDDRGEMMSMVYNWPAEQVDMIVVTDGSRILGLGDLGVHGIGVAIGKLDLYVAAAGINPQRVLPVMIDVGTNNEDLLKNPLYLGLQKKRLDGEEYLAVMDEFMEAVFTRWPNVIVQFEDIQNKWALTLLQRYRHKYRTFNVDVQGTSGVAIAGLLGAVRAQGRPMIDFPKQKIVVAGAGSSGVGVLNAARKTMARMLGNDESAFDRARSQFWVVDDKGLITEKRANLDPEVQPFAWKENEISLQGLNEGAKLVEVVRQVKPDVLLGLSAYGGLFSKEVLEALKDSTSTRPAIFAMSNPTKNAECTPEEAFSIVGDHVVYASGSPFKDVDLGNGKIGHVNQGNNMYLFPGIGLGVLLSGSRIISDSMFQAAAERLAGYMTDEEVINGVIYPSISRIRDITKEVAAAVIKEAVEEDLAEGYRDMDARELQKLNEEQILEYIEKNMWNPEYPTLVYKKR</sequence>
<reference key="1">
    <citation type="journal article" date="1994" name="J. Biol. Chem.">
        <title>Cloning and analysis of the C4 photosynthetic NAD-dependent malic enzyme of amaranth mitochondria.</title>
        <authorList>
            <person name="Long J.J."/>
            <person name="Wang J.-L."/>
            <person name="Berry J.O."/>
        </authorList>
    </citation>
    <scope>NUCLEOTIDE SEQUENCE [MRNA]</scope>
    <scope>PARTIAL PROTEIN SEQUENCE</scope>
    <scope>SUBUNIT</scope>
    <scope>SUBCELLULAR LOCATION</scope>
</reference>